<proteinExistence type="inferred from homology"/>
<reference key="1">
    <citation type="journal article" date="2001" name="Proc. Natl. Acad. Sci. U.S.A.">
        <title>Complete genome sequence of an M1 strain of Streptococcus pyogenes.</title>
        <authorList>
            <person name="Ferretti J.J."/>
            <person name="McShan W.M."/>
            <person name="Ajdic D.J."/>
            <person name="Savic D.J."/>
            <person name="Savic G."/>
            <person name="Lyon K."/>
            <person name="Primeaux C."/>
            <person name="Sezate S."/>
            <person name="Suvorov A.N."/>
            <person name="Kenton S."/>
            <person name="Lai H.S."/>
            <person name="Lin S.P."/>
            <person name="Qian Y."/>
            <person name="Jia H.G."/>
            <person name="Najar F.Z."/>
            <person name="Ren Q."/>
            <person name="Zhu H."/>
            <person name="Song L."/>
            <person name="White J."/>
            <person name="Yuan X."/>
            <person name="Clifton S.W."/>
            <person name="Roe B.A."/>
            <person name="McLaughlin R.E."/>
        </authorList>
    </citation>
    <scope>NUCLEOTIDE SEQUENCE [LARGE SCALE GENOMIC DNA]</scope>
    <source>
        <strain>ATCC 700294 / SF370 / Serotype M1</strain>
    </source>
</reference>
<reference key="2">
    <citation type="journal article" date="2005" name="J. Infect. Dis.">
        <title>Evolutionary origin and emergence of a highly successful clone of serotype M1 group A Streptococcus involved multiple horizontal gene transfer events.</title>
        <authorList>
            <person name="Sumby P."/>
            <person name="Porcella S.F."/>
            <person name="Madrigal A.G."/>
            <person name="Barbian K.D."/>
            <person name="Virtaneva K."/>
            <person name="Ricklefs S.M."/>
            <person name="Sturdevant D.E."/>
            <person name="Graham M.R."/>
            <person name="Vuopio-Varkila J."/>
            <person name="Hoe N.P."/>
            <person name="Musser J.M."/>
        </authorList>
    </citation>
    <scope>NUCLEOTIDE SEQUENCE [LARGE SCALE GENOMIC DNA]</scope>
    <source>
        <strain>ATCC BAA-947 / MGAS5005 / Serotype M1</strain>
    </source>
</reference>
<reference key="3">
    <citation type="journal article" date="2005" name="Bioinformatics">
        <title>Improving genome annotations using phylogenetic profile anomaly detection.</title>
        <authorList>
            <person name="Mikkelsen T.S."/>
            <person name="Galagan J.E."/>
            <person name="Mesirov J.P."/>
        </authorList>
    </citation>
    <scope>IDENTIFICATION</scope>
</reference>
<evidence type="ECO:0000255" key="1">
    <source>
        <dbReference type="HAMAP-Rule" id="MF_00972"/>
    </source>
</evidence>
<evidence type="ECO:0000255" key="2">
    <source>
        <dbReference type="PROSITE-ProRule" id="PRU01083"/>
    </source>
</evidence>
<dbReference type="EC" id="3.5.4.33" evidence="1"/>
<dbReference type="EMBL" id="AE004092">
    <property type="status" value="NOT_ANNOTATED_CDS"/>
    <property type="molecule type" value="Genomic_DNA"/>
</dbReference>
<dbReference type="EMBL" id="CP000017">
    <property type="protein sequence ID" value="AAZ50798.1"/>
    <property type="molecule type" value="Genomic_DNA"/>
</dbReference>
<dbReference type="SMR" id="P68999"/>
<dbReference type="PaxDb" id="1314-HKU360_00224"/>
<dbReference type="KEGG" id="spz:M5005_Spy0179"/>
<dbReference type="HOGENOM" id="CLU_025810_3_2_9"/>
<dbReference type="OMA" id="PCQMCAG"/>
<dbReference type="Proteomes" id="UP000000750">
    <property type="component" value="Chromosome"/>
</dbReference>
<dbReference type="GO" id="GO:0052717">
    <property type="term" value="F:tRNA-specific adenosine-34 deaminase activity"/>
    <property type="evidence" value="ECO:0007669"/>
    <property type="project" value="UniProtKB-UniRule"/>
</dbReference>
<dbReference type="GO" id="GO:0008270">
    <property type="term" value="F:zinc ion binding"/>
    <property type="evidence" value="ECO:0007669"/>
    <property type="project" value="UniProtKB-UniRule"/>
</dbReference>
<dbReference type="GO" id="GO:0002100">
    <property type="term" value="P:tRNA wobble adenosine to inosine editing"/>
    <property type="evidence" value="ECO:0007669"/>
    <property type="project" value="UniProtKB-UniRule"/>
</dbReference>
<dbReference type="CDD" id="cd01285">
    <property type="entry name" value="nucleoside_deaminase"/>
    <property type="match status" value="1"/>
</dbReference>
<dbReference type="FunFam" id="3.40.140.10:FF:000005">
    <property type="entry name" value="tRNA-specific adenosine deaminase"/>
    <property type="match status" value="1"/>
</dbReference>
<dbReference type="Gene3D" id="3.40.140.10">
    <property type="entry name" value="Cytidine Deaminase, domain 2"/>
    <property type="match status" value="1"/>
</dbReference>
<dbReference type="HAMAP" id="MF_00972">
    <property type="entry name" value="tRNA_aden_deaminase"/>
    <property type="match status" value="1"/>
</dbReference>
<dbReference type="InterPro" id="IPR016192">
    <property type="entry name" value="APOBEC/CMP_deaminase_Zn-bd"/>
</dbReference>
<dbReference type="InterPro" id="IPR002125">
    <property type="entry name" value="CMP_dCMP_dom"/>
</dbReference>
<dbReference type="InterPro" id="IPR016193">
    <property type="entry name" value="Cytidine_deaminase-like"/>
</dbReference>
<dbReference type="InterPro" id="IPR028883">
    <property type="entry name" value="tRNA_aden_deaminase"/>
</dbReference>
<dbReference type="NCBIfam" id="NF008113">
    <property type="entry name" value="PRK10860.1"/>
    <property type="match status" value="1"/>
</dbReference>
<dbReference type="PANTHER" id="PTHR11079">
    <property type="entry name" value="CYTOSINE DEAMINASE FAMILY MEMBER"/>
    <property type="match status" value="1"/>
</dbReference>
<dbReference type="PANTHER" id="PTHR11079:SF202">
    <property type="entry name" value="TRNA-SPECIFIC ADENOSINE DEAMINASE"/>
    <property type="match status" value="1"/>
</dbReference>
<dbReference type="Pfam" id="PF14437">
    <property type="entry name" value="MafB19-deam"/>
    <property type="match status" value="1"/>
</dbReference>
<dbReference type="SUPFAM" id="SSF53927">
    <property type="entry name" value="Cytidine deaminase-like"/>
    <property type="match status" value="1"/>
</dbReference>
<dbReference type="PROSITE" id="PS00903">
    <property type="entry name" value="CYT_DCMP_DEAMINASES_1"/>
    <property type="match status" value="1"/>
</dbReference>
<dbReference type="PROSITE" id="PS51747">
    <property type="entry name" value="CYT_DCMP_DEAMINASES_2"/>
    <property type="match status" value="1"/>
</dbReference>
<keyword id="KW-0378">Hydrolase</keyword>
<keyword id="KW-0479">Metal-binding</keyword>
<keyword id="KW-1185">Reference proteome</keyword>
<keyword id="KW-0819">tRNA processing</keyword>
<keyword id="KW-0862">Zinc</keyword>
<gene>
    <name evidence="1" type="primary">tadA</name>
    <name type="ordered locus">SPy_0209</name>
    <name type="ordered locus">M5005_Spy0179</name>
</gene>
<organism>
    <name type="scientific">Streptococcus pyogenes serotype M1</name>
    <dbReference type="NCBI Taxonomy" id="301447"/>
    <lineage>
        <taxon>Bacteria</taxon>
        <taxon>Bacillati</taxon>
        <taxon>Bacillota</taxon>
        <taxon>Bacilli</taxon>
        <taxon>Lactobacillales</taxon>
        <taxon>Streptococcaceae</taxon>
        <taxon>Streptococcus</taxon>
    </lineage>
</organism>
<sequence>MPYSLEEQTYFMQEALKEAEKSLQKAEIPIGCVIVKDGEIIGRGHNAREESNQAIMHAEMMAINEANAHEGNWRLLDTTLFVTIEPCVMCSGAIGLARIPHVIYGASNQKFGGVDSLYQILTDERLNHRVQVERGLLAADCANIMQTFFRQGRERKKIAKHLIKEQSDPFD</sequence>
<name>TADA_STRP1</name>
<accession>P68999</accession>
<accession>Q491C0</accession>
<comment type="function">
    <text evidence="1">Catalyzes the deamination of adenosine to inosine at the wobble position 34 of tRNA(Arg2).</text>
</comment>
<comment type="catalytic activity">
    <reaction evidence="1">
        <text>adenosine(34) in tRNA + H2O + H(+) = inosine(34) in tRNA + NH4(+)</text>
        <dbReference type="Rhea" id="RHEA:43168"/>
        <dbReference type="Rhea" id="RHEA-COMP:10373"/>
        <dbReference type="Rhea" id="RHEA-COMP:10374"/>
        <dbReference type="ChEBI" id="CHEBI:15377"/>
        <dbReference type="ChEBI" id="CHEBI:15378"/>
        <dbReference type="ChEBI" id="CHEBI:28938"/>
        <dbReference type="ChEBI" id="CHEBI:74411"/>
        <dbReference type="ChEBI" id="CHEBI:82852"/>
        <dbReference type="EC" id="3.5.4.33"/>
    </reaction>
</comment>
<comment type="cofactor">
    <cofactor evidence="1">
        <name>Zn(2+)</name>
        <dbReference type="ChEBI" id="CHEBI:29105"/>
    </cofactor>
    <text evidence="1">Binds 1 zinc ion per subunit.</text>
</comment>
<comment type="subunit">
    <text evidence="1">Homodimer.</text>
</comment>
<comment type="similarity">
    <text evidence="1">Belongs to the cytidine and deoxycytidylate deaminase family.</text>
</comment>
<feature type="chain" id="PRO_0000171707" description="tRNA-specific adenosine deaminase">
    <location>
        <begin position="1"/>
        <end position="171"/>
    </location>
</feature>
<feature type="domain" description="CMP/dCMP-type deaminase" evidence="2">
    <location>
        <begin position="6"/>
        <end position="133"/>
    </location>
</feature>
<feature type="active site" description="Proton donor" evidence="1">
    <location>
        <position position="59"/>
    </location>
</feature>
<feature type="binding site" evidence="1">
    <location>
        <position position="57"/>
    </location>
    <ligand>
        <name>Zn(2+)</name>
        <dbReference type="ChEBI" id="CHEBI:29105"/>
        <note>catalytic</note>
    </ligand>
</feature>
<feature type="binding site" evidence="1">
    <location>
        <position position="87"/>
    </location>
    <ligand>
        <name>Zn(2+)</name>
        <dbReference type="ChEBI" id="CHEBI:29105"/>
        <note>catalytic</note>
    </ligand>
</feature>
<feature type="binding site" evidence="1">
    <location>
        <position position="90"/>
    </location>
    <ligand>
        <name>Zn(2+)</name>
        <dbReference type="ChEBI" id="CHEBI:29105"/>
        <note>catalytic</note>
    </ligand>
</feature>
<protein>
    <recommendedName>
        <fullName evidence="1">tRNA-specific adenosine deaminase</fullName>
        <ecNumber evidence="1">3.5.4.33</ecNumber>
    </recommendedName>
</protein>